<dbReference type="EC" id="2.7.2.8" evidence="1"/>
<dbReference type="EMBL" id="CP001110">
    <property type="protein sequence ID" value="ACF43644.1"/>
    <property type="molecule type" value="Genomic_DNA"/>
</dbReference>
<dbReference type="RefSeq" id="WP_012508135.1">
    <property type="nucleotide sequence ID" value="NC_011060.1"/>
</dbReference>
<dbReference type="SMR" id="B4S9U8"/>
<dbReference type="STRING" id="324925.Ppha_1381"/>
<dbReference type="KEGG" id="pph:Ppha_1381"/>
<dbReference type="eggNOG" id="COG0548">
    <property type="taxonomic scope" value="Bacteria"/>
</dbReference>
<dbReference type="HOGENOM" id="CLU_053680_0_0_10"/>
<dbReference type="UniPathway" id="UPA00068">
    <property type="reaction ID" value="UER00107"/>
</dbReference>
<dbReference type="Proteomes" id="UP000002724">
    <property type="component" value="Chromosome"/>
</dbReference>
<dbReference type="GO" id="GO:0005737">
    <property type="term" value="C:cytoplasm"/>
    <property type="evidence" value="ECO:0007669"/>
    <property type="project" value="UniProtKB-SubCell"/>
</dbReference>
<dbReference type="GO" id="GO:0003991">
    <property type="term" value="F:acetylglutamate kinase activity"/>
    <property type="evidence" value="ECO:0007669"/>
    <property type="project" value="UniProtKB-UniRule"/>
</dbReference>
<dbReference type="GO" id="GO:0005524">
    <property type="term" value="F:ATP binding"/>
    <property type="evidence" value="ECO:0007669"/>
    <property type="project" value="UniProtKB-UniRule"/>
</dbReference>
<dbReference type="GO" id="GO:0042450">
    <property type="term" value="P:arginine biosynthetic process via ornithine"/>
    <property type="evidence" value="ECO:0007669"/>
    <property type="project" value="UniProtKB-UniRule"/>
</dbReference>
<dbReference type="GO" id="GO:0006526">
    <property type="term" value="P:L-arginine biosynthetic process"/>
    <property type="evidence" value="ECO:0007669"/>
    <property type="project" value="UniProtKB-UniPathway"/>
</dbReference>
<dbReference type="CDD" id="cd04250">
    <property type="entry name" value="AAK_NAGK-C"/>
    <property type="match status" value="1"/>
</dbReference>
<dbReference type="FunFam" id="3.40.1160.10:FF:000004">
    <property type="entry name" value="Acetylglutamate kinase"/>
    <property type="match status" value="1"/>
</dbReference>
<dbReference type="Gene3D" id="3.40.1160.10">
    <property type="entry name" value="Acetylglutamate kinase-like"/>
    <property type="match status" value="1"/>
</dbReference>
<dbReference type="HAMAP" id="MF_00082">
    <property type="entry name" value="ArgB"/>
    <property type="match status" value="1"/>
</dbReference>
<dbReference type="InterPro" id="IPR036393">
    <property type="entry name" value="AceGlu_kinase-like_sf"/>
</dbReference>
<dbReference type="InterPro" id="IPR004662">
    <property type="entry name" value="AcgluKinase_fam"/>
</dbReference>
<dbReference type="InterPro" id="IPR037528">
    <property type="entry name" value="ArgB"/>
</dbReference>
<dbReference type="InterPro" id="IPR001048">
    <property type="entry name" value="Asp/Glu/Uridylate_kinase"/>
</dbReference>
<dbReference type="InterPro" id="IPR001057">
    <property type="entry name" value="Glu/AcGlu_kinase"/>
</dbReference>
<dbReference type="InterPro" id="IPR041727">
    <property type="entry name" value="NAGK-C"/>
</dbReference>
<dbReference type="NCBIfam" id="TIGR00761">
    <property type="entry name" value="argB"/>
    <property type="match status" value="1"/>
</dbReference>
<dbReference type="PANTHER" id="PTHR23342">
    <property type="entry name" value="N-ACETYLGLUTAMATE SYNTHASE"/>
    <property type="match status" value="1"/>
</dbReference>
<dbReference type="PANTHER" id="PTHR23342:SF0">
    <property type="entry name" value="N-ACETYLGLUTAMATE SYNTHASE, MITOCHONDRIAL"/>
    <property type="match status" value="1"/>
</dbReference>
<dbReference type="Pfam" id="PF00696">
    <property type="entry name" value="AA_kinase"/>
    <property type="match status" value="1"/>
</dbReference>
<dbReference type="PIRSF" id="PIRSF000728">
    <property type="entry name" value="NAGK"/>
    <property type="match status" value="1"/>
</dbReference>
<dbReference type="PRINTS" id="PR00474">
    <property type="entry name" value="GLU5KINASE"/>
</dbReference>
<dbReference type="SUPFAM" id="SSF53633">
    <property type="entry name" value="Carbamate kinase-like"/>
    <property type="match status" value="1"/>
</dbReference>
<accession>B4S9U8</accession>
<evidence type="ECO:0000255" key="1">
    <source>
        <dbReference type="HAMAP-Rule" id="MF_00082"/>
    </source>
</evidence>
<reference key="1">
    <citation type="submission" date="2008-06" db="EMBL/GenBank/DDBJ databases">
        <title>Complete sequence of Pelodictyon phaeoclathratiforme BU-1.</title>
        <authorList>
            <consortium name="US DOE Joint Genome Institute"/>
            <person name="Lucas S."/>
            <person name="Copeland A."/>
            <person name="Lapidus A."/>
            <person name="Glavina del Rio T."/>
            <person name="Dalin E."/>
            <person name="Tice H."/>
            <person name="Bruce D."/>
            <person name="Goodwin L."/>
            <person name="Pitluck S."/>
            <person name="Schmutz J."/>
            <person name="Larimer F."/>
            <person name="Land M."/>
            <person name="Hauser L."/>
            <person name="Kyrpides N."/>
            <person name="Mikhailova N."/>
            <person name="Liu Z."/>
            <person name="Li T."/>
            <person name="Zhao F."/>
            <person name="Overmann J."/>
            <person name="Bryant D.A."/>
            <person name="Richardson P."/>
        </authorList>
    </citation>
    <scope>NUCLEOTIDE SEQUENCE [LARGE SCALE GENOMIC DNA]</scope>
    <source>
        <strain>DSM 5477 / BU-1</strain>
    </source>
</reference>
<feature type="chain" id="PRO_1000092870" description="Acetylglutamate kinase">
    <location>
        <begin position="1"/>
        <end position="304"/>
    </location>
</feature>
<feature type="binding site" evidence="1">
    <location>
        <begin position="77"/>
        <end position="78"/>
    </location>
    <ligand>
        <name>substrate</name>
    </ligand>
</feature>
<feature type="binding site" evidence="1">
    <location>
        <position position="99"/>
    </location>
    <ligand>
        <name>substrate</name>
    </ligand>
</feature>
<feature type="binding site" evidence="1">
    <location>
        <position position="193"/>
    </location>
    <ligand>
        <name>substrate</name>
    </ligand>
</feature>
<feature type="site" description="Transition state stabilizer" evidence="1">
    <location>
        <position position="42"/>
    </location>
</feature>
<feature type="site" description="Transition state stabilizer" evidence="1">
    <location>
        <position position="252"/>
    </location>
</feature>
<keyword id="KW-0028">Amino-acid biosynthesis</keyword>
<keyword id="KW-0055">Arginine biosynthesis</keyword>
<keyword id="KW-0067">ATP-binding</keyword>
<keyword id="KW-0963">Cytoplasm</keyword>
<keyword id="KW-0418">Kinase</keyword>
<keyword id="KW-0547">Nucleotide-binding</keyword>
<keyword id="KW-1185">Reference proteome</keyword>
<keyword id="KW-0808">Transferase</keyword>
<comment type="function">
    <text evidence="1">Catalyzes the ATP-dependent phosphorylation of N-acetyl-L-glutamate.</text>
</comment>
<comment type="catalytic activity">
    <reaction evidence="1">
        <text>N-acetyl-L-glutamate + ATP = N-acetyl-L-glutamyl 5-phosphate + ADP</text>
        <dbReference type="Rhea" id="RHEA:14629"/>
        <dbReference type="ChEBI" id="CHEBI:30616"/>
        <dbReference type="ChEBI" id="CHEBI:44337"/>
        <dbReference type="ChEBI" id="CHEBI:57936"/>
        <dbReference type="ChEBI" id="CHEBI:456216"/>
        <dbReference type="EC" id="2.7.2.8"/>
    </reaction>
</comment>
<comment type="pathway">
    <text evidence="1">Amino-acid biosynthesis; L-arginine biosynthesis; N(2)-acetyl-L-ornithine from L-glutamate: step 2/4.</text>
</comment>
<comment type="subcellular location">
    <subcellularLocation>
        <location evidence="1">Cytoplasm</location>
    </subcellularLocation>
</comment>
<comment type="similarity">
    <text evidence="1">Belongs to the acetylglutamate kinase family. ArgB subfamily.</text>
</comment>
<gene>
    <name evidence="1" type="primary">argB</name>
    <name type="ordered locus">Ppha_1381</name>
</gene>
<organism>
    <name type="scientific">Pelodictyon phaeoclathratiforme (strain DSM 5477 / BU-1)</name>
    <dbReference type="NCBI Taxonomy" id="324925"/>
    <lineage>
        <taxon>Bacteria</taxon>
        <taxon>Pseudomonadati</taxon>
        <taxon>Chlorobiota</taxon>
        <taxon>Chlorobiia</taxon>
        <taxon>Chlorobiales</taxon>
        <taxon>Chlorobiaceae</taxon>
        <taxon>Chlorobium/Pelodictyon group</taxon>
        <taxon>Pelodictyon</taxon>
    </lineage>
</organism>
<protein>
    <recommendedName>
        <fullName evidence="1">Acetylglutamate kinase</fullName>
        <ecNumber evidence="1">2.7.2.8</ecNumber>
    </recommendedName>
    <alternativeName>
        <fullName evidence="1">N-acetyl-L-glutamate 5-phosphotransferase</fullName>
    </alternativeName>
    <alternativeName>
        <fullName evidence="1">NAG kinase</fullName>
        <shortName evidence="1">NAGK</shortName>
    </alternativeName>
</protein>
<proteinExistence type="inferred from homology"/>
<sequence>MDKLPCNELNQVRKAPHAAIGPVLIEALPYIRKFEGKTFVIKYGGAAMKDACLKNSFAQNVTLLRKVGIRIVLVHGGGDAITKTAEKLGITSRFLHGRRVTDKEMISVIQMTLAGKVNQDIVQLISEHGGKAVGVTGLDADTIKALPHPNAETLGLVGEVEQINTAYIDLLCRAGLIPVIAPIGFDDKGNVYNINADDAASSIAIALKAEKLIYVSDVEGIHVGERILKTICKTEAADFIEQGIISGGMIPKVLSAFKTLDSGVGKIHLIDGKATHSLLLEIFTHEGVGTQFIAEQDSDQSQNR</sequence>
<name>ARGB_PELPB</name>